<organism>
    <name type="scientific">Escherichia coli (strain UTI89 / UPEC)</name>
    <dbReference type="NCBI Taxonomy" id="364106"/>
    <lineage>
        <taxon>Bacteria</taxon>
        <taxon>Pseudomonadati</taxon>
        <taxon>Pseudomonadota</taxon>
        <taxon>Gammaproteobacteria</taxon>
        <taxon>Enterobacterales</taxon>
        <taxon>Enterobacteriaceae</taxon>
        <taxon>Escherichia</taxon>
    </lineage>
</organism>
<dbReference type="EC" id="3.5.1.-" evidence="1"/>
<dbReference type="EMBL" id="CP000243">
    <property type="protein sequence ID" value="ABE06556.1"/>
    <property type="molecule type" value="Genomic_DNA"/>
</dbReference>
<dbReference type="SMR" id="Q1RDK8"/>
<dbReference type="ESTHER" id="ecoli-rutD">
    <property type="family name" value="RutD"/>
</dbReference>
<dbReference type="KEGG" id="eci:UTI89_C1072"/>
<dbReference type="HOGENOM" id="CLU_020336_50_1_6"/>
<dbReference type="Proteomes" id="UP000001952">
    <property type="component" value="Chromosome"/>
</dbReference>
<dbReference type="GO" id="GO:0016811">
    <property type="term" value="F:hydrolase activity, acting on carbon-nitrogen (but not peptide) bonds, in linear amides"/>
    <property type="evidence" value="ECO:0007669"/>
    <property type="project" value="InterPro"/>
</dbReference>
<dbReference type="GO" id="GO:0019740">
    <property type="term" value="P:nitrogen utilization"/>
    <property type="evidence" value="ECO:0007669"/>
    <property type="project" value="UniProtKB-UniRule"/>
</dbReference>
<dbReference type="GO" id="GO:0006212">
    <property type="term" value="P:uracil catabolic process"/>
    <property type="evidence" value="ECO:0007669"/>
    <property type="project" value="UniProtKB-UniRule"/>
</dbReference>
<dbReference type="FunFam" id="3.40.50.1820:FF:000052">
    <property type="entry name" value="Putative aminoacrylate hydrolase RutD"/>
    <property type="match status" value="1"/>
</dbReference>
<dbReference type="Gene3D" id="3.40.50.1820">
    <property type="entry name" value="alpha/beta hydrolase"/>
    <property type="match status" value="1"/>
</dbReference>
<dbReference type="HAMAP" id="MF_00832">
    <property type="entry name" value="RutD"/>
    <property type="match status" value="1"/>
</dbReference>
<dbReference type="InterPro" id="IPR000073">
    <property type="entry name" value="AB_hydrolase_1"/>
</dbReference>
<dbReference type="InterPro" id="IPR029058">
    <property type="entry name" value="AB_hydrolase_fold"/>
</dbReference>
<dbReference type="InterPro" id="IPR050266">
    <property type="entry name" value="AB_hydrolase_sf"/>
</dbReference>
<dbReference type="InterPro" id="IPR019913">
    <property type="entry name" value="Pyrimidine_utilisation_RutD"/>
</dbReference>
<dbReference type="NCBIfam" id="TIGR03611">
    <property type="entry name" value="RutD"/>
    <property type="match status" value="1"/>
</dbReference>
<dbReference type="PANTHER" id="PTHR43798">
    <property type="entry name" value="MONOACYLGLYCEROL LIPASE"/>
    <property type="match status" value="1"/>
</dbReference>
<dbReference type="Pfam" id="PF00561">
    <property type="entry name" value="Abhydrolase_1"/>
    <property type="match status" value="1"/>
</dbReference>
<dbReference type="PRINTS" id="PR00111">
    <property type="entry name" value="ABHYDROLASE"/>
</dbReference>
<dbReference type="SUPFAM" id="SSF53474">
    <property type="entry name" value="alpha/beta-Hydrolases"/>
    <property type="match status" value="1"/>
</dbReference>
<protein>
    <recommendedName>
        <fullName evidence="1">Putative carbamate hydrolase RutD</fullName>
        <ecNumber evidence="1">3.5.1.-</ecNumber>
    </recommendedName>
    <alternativeName>
        <fullName evidence="1">Aminohydrolase</fullName>
    </alternativeName>
</protein>
<sequence length="275" mass="29821">MRISPSEAAMKLSLSPPPYADAPVVVLISGLGGSGSYWLPQLAVLVQEYQVVCYDQRGTGNNPDTLAEDYSIAQMAAELHQALVAAGIERYAVVGHALGALVGMQLALDYPASVTVLVSVNGWLRINAHTRRCFQVREQLLHSGGAQAWVEAQPLFLYPADWMAARAPRLEAEDALALAHFQGKNNLLRRLNALKRADFSHHADRIRCPVQIICASDDLLVPTACSSELHAALPDSQKMVMRYGGHACNVTDPETFNALLLNGLASLLHHREAAL</sequence>
<reference key="1">
    <citation type="journal article" date="2006" name="Proc. Natl. Acad. Sci. U.S.A.">
        <title>Identification of genes subject to positive selection in uropathogenic strains of Escherichia coli: a comparative genomics approach.</title>
        <authorList>
            <person name="Chen S.L."/>
            <person name="Hung C.-S."/>
            <person name="Xu J."/>
            <person name="Reigstad C.S."/>
            <person name="Magrini V."/>
            <person name="Sabo A."/>
            <person name="Blasiar D."/>
            <person name="Bieri T."/>
            <person name="Meyer R.R."/>
            <person name="Ozersky P."/>
            <person name="Armstrong J.R."/>
            <person name="Fulton R.S."/>
            <person name="Latreille J.P."/>
            <person name="Spieth J."/>
            <person name="Hooton T.M."/>
            <person name="Mardis E.R."/>
            <person name="Hultgren S.J."/>
            <person name="Gordon J.I."/>
        </authorList>
    </citation>
    <scope>NUCLEOTIDE SEQUENCE [LARGE SCALE GENOMIC DNA]</scope>
    <source>
        <strain>UTI89 / UPEC</strain>
    </source>
</reference>
<accession>Q1RDK8</accession>
<evidence type="ECO:0000255" key="1">
    <source>
        <dbReference type="HAMAP-Rule" id="MF_00832"/>
    </source>
</evidence>
<comment type="function">
    <text evidence="1">Involved in pyrimidine catabolism. May facilitate the hydrolysis of carbamate, a reaction that can also occur spontaneously.</text>
</comment>
<comment type="catalytic activity">
    <reaction evidence="1">
        <text>carbamate + 2 H(+) = NH4(+) + CO2</text>
        <dbReference type="Rhea" id="RHEA:15649"/>
        <dbReference type="ChEBI" id="CHEBI:13941"/>
        <dbReference type="ChEBI" id="CHEBI:15378"/>
        <dbReference type="ChEBI" id="CHEBI:16526"/>
        <dbReference type="ChEBI" id="CHEBI:28938"/>
    </reaction>
</comment>
<comment type="similarity">
    <text evidence="1">Belongs to the AB hydrolase superfamily. Hydrolase RutD family.</text>
</comment>
<keyword id="KW-0378">Hydrolase</keyword>
<name>RUTD_ECOUT</name>
<proteinExistence type="inferred from homology"/>
<gene>
    <name evidence="1" type="primary">rutD</name>
    <name type="ordered locus">UTI89_C1072</name>
</gene>
<feature type="chain" id="PRO_0000402946" description="Putative carbamate hydrolase RutD">
    <location>
        <begin position="1"/>
        <end position="275"/>
    </location>
</feature>